<gene>
    <name type="ordered locus">MPN_127</name>
    <name type="ORF">C09_orf180</name>
    <name type="ORF">MP027</name>
</gene>
<reference key="1">
    <citation type="journal article" date="1996" name="Nucleic Acids Res.">
        <title>Complete sequence analysis of the genome of the bacterium Mycoplasma pneumoniae.</title>
        <authorList>
            <person name="Himmelreich R."/>
            <person name="Hilbert H."/>
            <person name="Plagens H."/>
            <person name="Pirkl E."/>
            <person name="Li B.-C."/>
            <person name="Herrmann R."/>
        </authorList>
    </citation>
    <scope>NUCLEOTIDE SEQUENCE [LARGE SCALE GENOMIC DNA]</scope>
    <source>
        <strain>ATCC 29342 / M129 / Subtype 1</strain>
    </source>
</reference>
<feature type="chain" id="PRO_0000221596" description="UPF0134 protein MPN_127">
    <location>
        <begin position="1"/>
        <end position="180"/>
    </location>
</feature>
<dbReference type="EMBL" id="U00089">
    <property type="protein sequence ID" value="AAB95675.1"/>
    <property type="molecule type" value="Genomic_DNA"/>
</dbReference>
<dbReference type="PIR" id="S73353">
    <property type="entry name" value="S73353"/>
</dbReference>
<dbReference type="SMR" id="P75348"/>
<dbReference type="STRING" id="272634.MPN_127"/>
<dbReference type="EnsemblBacteria" id="AAB95675">
    <property type="protein sequence ID" value="AAB95675"/>
    <property type="gene ID" value="MPN_127"/>
</dbReference>
<dbReference type="KEGG" id="mpn:MPN_127"/>
<dbReference type="HOGENOM" id="CLU_1494676_0_0_14"/>
<dbReference type="Proteomes" id="UP000000808">
    <property type="component" value="Chromosome"/>
</dbReference>
<dbReference type="Gene3D" id="6.10.250.40">
    <property type="match status" value="1"/>
</dbReference>
<dbReference type="InterPro" id="IPR002862">
    <property type="entry name" value="DUF16"/>
</dbReference>
<dbReference type="Pfam" id="PF01519">
    <property type="entry name" value="DUF16"/>
    <property type="match status" value="1"/>
</dbReference>
<dbReference type="SUPFAM" id="SSF144266">
    <property type="entry name" value="MPN010-like"/>
    <property type="match status" value="1"/>
</dbReference>
<evidence type="ECO:0000305" key="1"/>
<name>Y127_MYCPN</name>
<accession>P75348</accession>
<protein>
    <recommendedName>
        <fullName>UPF0134 protein MPN_127</fullName>
    </recommendedName>
</protein>
<organism>
    <name type="scientific">Mycoplasma pneumoniae (strain ATCC 29342 / M129 / Subtype 1)</name>
    <name type="common">Mycoplasmoides pneumoniae</name>
    <dbReference type="NCBI Taxonomy" id="272634"/>
    <lineage>
        <taxon>Bacteria</taxon>
        <taxon>Bacillati</taxon>
        <taxon>Mycoplasmatota</taxon>
        <taxon>Mycoplasmoidales</taxon>
        <taxon>Mycoplasmoidaceae</taxon>
        <taxon>Mycoplasmoides</taxon>
    </lineage>
</organism>
<sequence>MFKLKINNFQLGFKLVQWPVTNHLLKHFYVFPINNKGGLAIKRIISLALFKKRLNKDKINNCHVWEEELPDGSYDMGFNGNFNHMEKRKSGYVTQKQFSEFKDANNQRLIKIETTLAIQGEQINKLTQTVEKQGEQINQLVQVVLLQGASKLENFKWSKKHKDKSLMPAWIVWKIFWWKV</sequence>
<keyword id="KW-1185">Reference proteome</keyword>
<comment type="similarity">
    <text evidence="1">Belongs to the UPF0134 family.</text>
</comment>
<proteinExistence type="inferred from homology"/>